<reference key="1">
    <citation type="journal article" date="2003" name="DNA Res.">
        <title>Prediction of the coding sequences of mouse homologues of KIAA gene: III. The complete nucleotide sequences of 500 mouse KIAA-homologous cDNAs identified by screening of terminal sequences of cDNA clones randomly sampled from size-fractionated libraries.</title>
        <authorList>
            <person name="Okazaki N."/>
            <person name="Kikuno R."/>
            <person name="Ohara R."/>
            <person name="Inamoto S."/>
            <person name="Koseki H."/>
            <person name="Hiraoka S."/>
            <person name="Saga Y."/>
            <person name="Nagase T."/>
            <person name="Ohara O."/>
            <person name="Koga H."/>
        </authorList>
    </citation>
    <scope>NUCLEOTIDE SEQUENCE [LARGE SCALE MRNA] (ISOFORM 2)</scope>
    <source>
        <tissue>Embryonic tail</tissue>
    </source>
</reference>
<reference key="2">
    <citation type="submission" date="2004-01" db="EMBL/GenBank/DDBJ databases">
        <authorList>
            <person name="Okazaki N."/>
            <person name="Kikuno R."/>
            <person name="Nagase T."/>
            <person name="Ohara O."/>
            <person name="Koga H."/>
        </authorList>
    </citation>
    <scope>SEQUENCE REVISION</scope>
</reference>
<reference key="3">
    <citation type="journal article" date="2004" name="Genome Res.">
        <title>The status, quality, and expansion of the NIH full-length cDNA project: the Mammalian Gene Collection (MGC).</title>
        <authorList>
            <consortium name="The MGC Project Team"/>
        </authorList>
    </citation>
    <scope>NUCLEOTIDE SEQUENCE [LARGE SCALE MRNA] (ISOFORM 1)</scope>
    <source>
        <strain>C57BL/6J</strain>
        <tissue>Eye</tissue>
        <tissue>Head</tissue>
    </source>
</reference>
<reference key="4">
    <citation type="journal article" date="2009" name="Immunity">
        <title>The phagosomal proteome in interferon-gamma-activated macrophages.</title>
        <authorList>
            <person name="Trost M."/>
            <person name="English L."/>
            <person name="Lemieux S."/>
            <person name="Courcelles M."/>
            <person name="Desjardins M."/>
            <person name="Thibault P."/>
        </authorList>
    </citation>
    <scope>PHOSPHORYLATION [LARGE SCALE ANALYSIS] AT SER-804</scope>
    <scope>IDENTIFICATION BY MASS SPECTROMETRY [LARGE SCALE ANALYSIS]</scope>
</reference>
<reference key="5">
    <citation type="journal article" date="2010" name="Cell">
        <title>A tissue-specific atlas of mouse protein phosphorylation and expression.</title>
        <authorList>
            <person name="Huttlin E.L."/>
            <person name="Jedrychowski M.P."/>
            <person name="Elias J.E."/>
            <person name="Goswami T."/>
            <person name="Rad R."/>
            <person name="Beausoleil S.A."/>
            <person name="Villen J."/>
            <person name="Haas W."/>
            <person name="Sowa M.E."/>
            <person name="Gygi S.P."/>
        </authorList>
    </citation>
    <scope>PHOSPHORYLATION [LARGE SCALE ANALYSIS] AT TYR-294; SER-295; SER-296 AND SER-804</scope>
    <scope>IDENTIFICATION BY MASS SPECTROMETRY [LARGE SCALE ANALYSIS]</scope>
    <source>
        <tissue>Kidney</tissue>
        <tissue>Pancreas</tissue>
        <tissue>Spleen</tissue>
        <tissue>Testis</tissue>
    </source>
</reference>
<reference key="6">
    <citation type="journal article" date="2013" name="Mol. Cell">
        <title>SIRT5-mediated lysine desuccinylation impacts diverse metabolic pathways.</title>
        <authorList>
            <person name="Park J."/>
            <person name="Chen Y."/>
            <person name="Tishkoff D.X."/>
            <person name="Peng C."/>
            <person name="Tan M."/>
            <person name="Dai L."/>
            <person name="Xie Z."/>
            <person name="Zhang Y."/>
            <person name="Zwaans B.M."/>
            <person name="Skinner M.E."/>
            <person name="Lombard D.B."/>
            <person name="Zhao Y."/>
        </authorList>
    </citation>
    <scope>ACETYLATION [LARGE SCALE ANALYSIS] AT LYS-904</scope>
    <scope>IDENTIFICATION BY MASS SPECTROMETRY [LARGE SCALE ANALYSIS]</scope>
    <source>
        <tissue>Embryonic fibroblast</tissue>
    </source>
</reference>
<proteinExistence type="evidence at protein level"/>
<gene>
    <name type="primary">Ddx46</name>
    <name type="synonym">Kiaa0801</name>
</gene>
<organism>
    <name type="scientific">Mus musculus</name>
    <name type="common">Mouse</name>
    <dbReference type="NCBI Taxonomy" id="10090"/>
    <lineage>
        <taxon>Eukaryota</taxon>
        <taxon>Metazoa</taxon>
        <taxon>Chordata</taxon>
        <taxon>Craniata</taxon>
        <taxon>Vertebrata</taxon>
        <taxon>Euteleostomi</taxon>
        <taxon>Mammalia</taxon>
        <taxon>Eutheria</taxon>
        <taxon>Euarchontoglires</taxon>
        <taxon>Glires</taxon>
        <taxon>Rodentia</taxon>
        <taxon>Myomorpha</taxon>
        <taxon>Muroidea</taxon>
        <taxon>Muridae</taxon>
        <taxon>Murinae</taxon>
        <taxon>Mus</taxon>
        <taxon>Mus</taxon>
    </lineage>
</organism>
<dbReference type="EC" id="3.6.4.13"/>
<dbReference type="EMBL" id="AK129220">
    <property type="protein sequence ID" value="BAC98030.2"/>
    <property type="status" value="ALT_INIT"/>
    <property type="molecule type" value="Transcribed_RNA"/>
</dbReference>
<dbReference type="EMBL" id="BC026492">
    <property type="protein sequence ID" value="AAH26492.1"/>
    <property type="status" value="ALT_INIT"/>
    <property type="molecule type" value="mRNA"/>
</dbReference>
<dbReference type="EMBL" id="BC092240">
    <property type="protein sequence ID" value="AAH92240.1"/>
    <property type="status" value="ALT_SEQ"/>
    <property type="molecule type" value="mRNA"/>
</dbReference>
<dbReference type="CCDS" id="CCDS70464.1">
    <molecule id="Q569Z5-1"/>
</dbReference>
<dbReference type="RefSeq" id="NP_001268984.1">
    <molecule id="Q569Z5-1"/>
    <property type="nucleotide sequence ID" value="NM_001282055.1"/>
</dbReference>
<dbReference type="SMR" id="Q569Z5"/>
<dbReference type="BioGRID" id="229365">
    <property type="interactions" value="6"/>
</dbReference>
<dbReference type="FunCoup" id="Q569Z5">
    <property type="interactions" value="4905"/>
</dbReference>
<dbReference type="IntAct" id="Q569Z5">
    <property type="interactions" value="1"/>
</dbReference>
<dbReference type="MINT" id="Q569Z5"/>
<dbReference type="STRING" id="10090.ENSMUSP00000133245"/>
<dbReference type="GlyGen" id="Q569Z5">
    <property type="glycosylation" value="2 sites"/>
</dbReference>
<dbReference type="iPTMnet" id="Q569Z5"/>
<dbReference type="PhosphoSitePlus" id="Q569Z5"/>
<dbReference type="SwissPalm" id="Q569Z5"/>
<dbReference type="jPOST" id="Q569Z5"/>
<dbReference type="PaxDb" id="10090-ENSMUSP00000133245"/>
<dbReference type="PeptideAtlas" id="Q569Z5"/>
<dbReference type="ProteomicsDB" id="279328">
    <molecule id="Q569Z5-1"/>
</dbReference>
<dbReference type="ProteomicsDB" id="279329">
    <molecule id="Q569Z5-2"/>
</dbReference>
<dbReference type="Pumba" id="Q569Z5"/>
<dbReference type="Antibodypedia" id="26347">
    <property type="antibodies" value="119 antibodies from 23 providers"/>
</dbReference>
<dbReference type="DNASU" id="212880"/>
<dbReference type="Ensembl" id="ENSMUST00000223736.2">
    <molecule id="Q569Z5-1"/>
    <property type="protein sequence ID" value="ENSMUSP00000153328.2"/>
    <property type="gene ID" value="ENSMUSG00000021500.19"/>
</dbReference>
<dbReference type="GeneID" id="212880"/>
<dbReference type="KEGG" id="mmu:212880"/>
<dbReference type="UCSC" id="uc033gma.1">
    <molecule id="Q569Z5-1"/>
    <property type="organism name" value="mouse"/>
</dbReference>
<dbReference type="AGR" id="MGI:1920895"/>
<dbReference type="CTD" id="9879"/>
<dbReference type="MGI" id="MGI:1920895">
    <property type="gene designation" value="Ddx46"/>
</dbReference>
<dbReference type="VEuPathDB" id="HostDB:ENSMUSG00000021500"/>
<dbReference type="eggNOG" id="KOG0334">
    <property type="taxonomic scope" value="Eukaryota"/>
</dbReference>
<dbReference type="GeneTree" id="ENSGT00940000157753"/>
<dbReference type="HOGENOM" id="CLU_003041_0_0_1"/>
<dbReference type="InParanoid" id="Q569Z5"/>
<dbReference type="OMA" id="QLPMKKW"/>
<dbReference type="OrthoDB" id="196131at2759"/>
<dbReference type="PhylomeDB" id="Q569Z5"/>
<dbReference type="TreeFam" id="TF354236"/>
<dbReference type="Reactome" id="R-MMU-72163">
    <property type="pathway name" value="mRNA Splicing - Major Pathway"/>
</dbReference>
<dbReference type="BioGRID-ORCS" id="212880">
    <property type="hits" value="17 hits in 74 CRISPR screens"/>
</dbReference>
<dbReference type="ChiTaRS" id="Ddx46">
    <property type="organism name" value="mouse"/>
</dbReference>
<dbReference type="PRO" id="PR:Q569Z5"/>
<dbReference type="Proteomes" id="UP000000589">
    <property type="component" value="Chromosome 13"/>
</dbReference>
<dbReference type="RNAct" id="Q569Z5">
    <property type="molecule type" value="protein"/>
</dbReference>
<dbReference type="Bgee" id="ENSMUSG00000021500">
    <property type="expression patterns" value="Expressed in embryonic post-anal tail and 246 other cell types or tissues"/>
</dbReference>
<dbReference type="ExpressionAtlas" id="Q569Z5">
    <property type="expression patterns" value="baseline and differential"/>
</dbReference>
<dbReference type="GO" id="GO:0015030">
    <property type="term" value="C:Cajal body"/>
    <property type="evidence" value="ECO:0007669"/>
    <property type="project" value="UniProtKB-SubCell"/>
</dbReference>
<dbReference type="GO" id="GO:0001650">
    <property type="term" value="C:fibrillar center"/>
    <property type="evidence" value="ECO:0007669"/>
    <property type="project" value="Ensembl"/>
</dbReference>
<dbReference type="GO" id="GO:0016607">
    <property type="term" value="C:nuclear speck"/>
    <property type="evidence" value="ECO:0007669"/>
    <property type="project" value="UniProtKB-SubCell"/>
</dbReference>
<dbReference type="GO" id="GO:0005684">
    <property type="term" value="C:U2-type spliceosomal complex"/>
    <property type="evidence" value="ECO:0000250"/>
    <property type="project" value="UniProtKB"/>
</dbReference>
<dbReference type="GO" id="GO:0005524">
    <property type="term" value="F:ATP binding"/>
    <property type="evidence" value="ECO:0007669"/>
    <property type="project" value="UniProtKB-KW"/>
</dbReference>
<dbReference type="GO" id="GO:0016887">
    <property type="term" value="F:ATP hydrolysis activity"/>
    <property type="evidence" value="ECO:0007669"/>
    <property type="project" value="RHEA"/>
</dbReference>
<dbReference type="GO" id="GO:0003723">
    <property type="term" value="F:RNA binding"/>
    <property type="evidence" value="ECO:0007669"/>
    <property type="project" value="UniProtKB-KW"/>
</dbReference>
<dbReference type="GO" id="GO:0003724">
    <property type="term" value="F:RNA helicase activity"/>
    <property type="evidence" value="ECO:0007669"/>
    <property type="project" value="UniProtKB-EC"/>
</dbReference>
<dbReference type="GO" id="GO:0000398">
    <property type="term" value="P:mRNA splicing, via spliceosome"/>
    <property type="evidence" value="ECO:0000250"/>
    <property type="project" value="UniProtKB"/>
</dbReference>
<dbReference type="GO" id="GO:1903241">
    <property type="term" value="P:U2-type prespliceosome assembly"/>
    <property type="evidence" value="ECO:0000250"/>
    <property type="project" value="UniProtKB"/>
</dbReference>
<dbReference type="CDD" id="cd17953">
    <property type="entry name" value="DEADc_DDX46"/>
    <property type="match status" value="1"/>
</dbReference>
<dbReference type="CDD" id="cd22473">
    <property type="entry name" value="KH-I_DDX46"/>
    <property type="match status" value="1"/>
</dbReference>
<dbReference type="CDD" id="cd18787">
    <property type="entry name" value="SF2_C_DEAD"/>
    <property type="match status" value="1"/>
</dbReference>
<dbReference type="FunFam" id="3.40.50.300:FF:000079">
    <property type="entry name" value="probable ATP-dependent RNA helicase DDX17"/>
    <property type="match status" value="1"/>
</dbReference>
<dbReference type="FunFam" id="3.40.50.300:FF:000584">
    <property type="entry name" value="probable ATP-dependent RNA helicase DDX46"/>
    <property type="match status" value="1"/>
</dbReference>
<dbReference type="Gene3D" id="3.40.50.300">
    <property type="entry name" value="P-loop containing nucleotide triphosphate hydrolases"/>
    <property type="match status" value="2"/>
</dbReference>
<dbReference type="InterPro" id="IPR011545">
    <property type="entry name" value="DEAD/DEAH_box_helicase_dom"/>
</dbReference>
<dbReference type="InterPro" id="IPR014001">
    <property type="entry name" value="Helicase_ATP-bd"/>
</dbReference>
<dbReference type="InterPro" id="IPR001650">
    <property type="entry name" value="Helicase_C-like"/>
</dbReference>
<dbReference type="InterPro" id="IPR027417">
    <property type="entry name" value="P-loop_NTPase"/>
</dbReference>
<dbReference type="InterPro" id="IPR056149">
    <property type="entry name" value="PRP5/DDX46/KHDC4_KH"/>
</dbReference>
<dbReference type="InterPro" id="IPR000629">
    <property type="entry name" value="RNA-helicase_DEAD-box_CS"/>
</dbReference>
<dbReference type="InterPro" id="IPR014014">
    <property type="entry name" value="RNA_helicase_DEAD_Q_motif"/>
</dbReference>
<dbReference type="PANTHER" id="PTHR47958">
    <property type="entry name" value="ATP-DEPENDENT RNA HELICASE DBP3"/>
    <property type="match status" value="1"/>
</dbReference>
<dbReference type="Pfam" id="PF00270">
    <property type="entry name" value="DEAD"/>
    <property type="match status" value="1"/>
</dbReference>
<dbReference type="Pfam" id="PF00271">
    <property type="entry name" value="Helicase_C"/>
    <property type="match status" value="1"/>
</dbReference>
<dbReference type="Pfam" id="PF23469">
    <property type="entry name" value="KH_12"/>
    <property type="match status" value="1"/>
</dbReference>
<dbReference type="SMART" id="SM00487">
    <property type="entry name" value="DEXDc"/>
    <property type="match status" value="1"/>
</dbReference>
<dbReference type="SMART" id="SM00490">
    <property type="entry name" value="HELICc"/>
    <property type="match status" value="1"/>
</dbReference>
<dbReference type="SUPFAM" id="SSF52540">
    <property type="entry name" value="P-loop containing nucleoside triphosphate hydrolases"/>
    <property type="match status" value="2"/>
</dbReference>
<dbReference type="PROSITE" id="PS00039">
    <property type="entry name" value="DEAD_ATP_HELICASE"/>
    <property type="match status" value="1"/>
</dbReference>
<dbReference type="PROSITE" id="PS51192">
    <property type="entry name" value="HELICASE_ATP_BIND_1"/>
    <property type="match status" value="1"/>
</dbReference>
<dbReference type="PROSITE" id="PS51194">
    <property type="entry name" value="HELICASE_CTER"/>
    <property type="match status" value="1"/>
</dbReference>
<dbReference type="PROSITE" id="PS51195">
    <property type="entry name" value="Q_MOTIF"/>
    <property type="match status" value="1"/>
</dbReference>
<protein>
    <recommendedName>
        <fullName>Probable ATP-dependent RNA helicase DDX46</fullName>
        <ecNumber>3.6.4.13</ecNumber>
    </recommendedName>
    <alternativeName>
        <fullName>DEAD box protein 46</fullName>
    </alternativeName>
</protein>
<name>DDX46_MOUSE</name>
<feature type="initiator methionine" description="Removed" evidence="2">
    <location>
        <position position="1"/>
    </location>
</feature>
<feature type="chain" id="PRO_0000055122" description="Probable ATP-dependent RNA helicase DDX46">
    <location>
        <begin position="2"/>
        <end position="1032"/>
    </location>
</feature>
<feature type="domain" description="Helicase ATP-binding" evidence="4">
    <location>
        <begin position="403"/>
        <end position="581"/>
    </location>
</feature>
<feature type="domain" description="Helicase C-terminal" evidence="5">
    <location>
        <begin position="592"/>
        <end position="753"/>
    </location>
</feature>
<feature type="region of interest" description="Disordered" evidence="6">
    <location>
        <begin position="1"/>
        <end position="227"/>
    </location>
</feature>
<feature type="coiled-coil region" evidence="3">
    <location>
        <begin position="152"/>
        <end position="197"/>
    </location>
</feature>
<feature type="short sequence motif" description="Q motif">
    <location>
        <begin position="372"/>
        <end position="400"/>
    </location>
</feature>
<feature type="short sequence motif" description="DEAD box">
    <location>
        <begin position="529"/>
        <end position="532"/>
    </location>
</feature>
<feature type="compositionally biased region" description="Basic residues" evidence="6">
    <location>
        <begin position="1"/>
        <end position="24"/>
    </location>
</feature>
<feature type="compositionally biased region" description="Basic and acidic residues" evidence="6">
    <location>
        <begin position="26"/>
        <end position="49"/>
    </location>
</feature>
<feature type="compositionally biased region" description="Basic residues" evidence="6">
    <location>
        <begin position="50"/>
        <end position="73"/>
    </location>
</feature>
<feature type="compositionally biased region" description="Basic residues" evidence="6">
    <location>
        <begin position="81"/>
        <end position="103"/>
    </location>
</feature>
<feature type="compositionally biased region" description="Basic and acidic residues" evidence="6">
    <location>
        <begin position="112"/>
        <end position="200"/>
    </location>
</feature>
<feature type="compositionally biased region" description="Acidic residues" evidence="6">
    <location>
        <begin position="201"/>
        <end position="211"/>
    </location>
</feature>
<feature type="binding site" evidence="4">
    <location>
        <begin position="416"/>
        <end position="423"/>
    </location>
    <ligand>
        <name>ATP</name>
        <dbReference type="ChEBI" id="CHEBI:30616"/>
    </ligand>
</feature>
<feature type="modified residue" description="Phosphoserine" evidence="1">
    <location>
        <position position="199"/>
    </location>
</feature>
<feature type="modified residue" description="N6-acetyllysine" evidence="2">
    <location>
        <position position="263"/>
    </location>
</feature>
<feature type="modified residue" description="Phosphotyrosine" evidence="10">
    <location>
        <position position="294"/>
    </location>
</feature>
<feature type="modified residue" description="Phosphoserine" evidence="10">
    <location>
        <position position="295"/>
    </location>
</feature>
<feature type="modified residue" description="Phosphoserine" evidence="10">
    <location>
        <position position="296"/>
    </location>
</feature>
<feature type="modified residue" description="Phosphoserine" evidence="2">
    <location>
        <position position="346"/>
    </location>
</feature>
<feature type="modified residue" description="N6-acetyllysine" evidence="2">
    <location>
        <position position="776"/>
    </location>
</feature>
<feature type="modified residue" description="Phosphoserine" evidence="9 10">
    <location>
        <position position="804"/>
    </location>
</feature>
<feature type="modified residue" description="N6-acetyllysine" evidence="11">
    <location>
        <position position="904"/>
    </location>
</feature>
<feature type="modified residue" description="Phosphoserine" evidence="2">
    <location>
        <position position="929"/>
    </location>
</feature>
<feature type="lipid moiety-binding region" description="N-myristoyl glycine" evidence="2">
    <location>
        <position position="2"/>
    </location>
</feature>
<feature type="cross-link" description="Glycyl lysine isopeptide (Lys-Gly) (interchain with G-Cter in SUMO2)" evidence="2">
    <location>
        <position position="186"/>
    </location>
</feature>
<feature type="cross-link" description="Glycyl lysine isopeptide (Lys-Gly) (interchain with G-Cter in SUMO2)" evidence="2">
    <location>
        <position position="325"/>
    </location>
</feature>
<feature type="cross-link" description="Glycyl lysine isopeptide (Lys-Gly) (interchain with G-Cter in SUMO2)" evidence="2">
    <location>
        <position position="779"/>
    </location>
</feature>
<feature type="cross-link" description="Glycyl lysine isopeptide (Lys-Gly) (interchain with G-Cter in SUMO2)" evidence="2">
    <location>
        <position position="908"/>
    </location>
</feature>
<feature type="cross-link" description="Glycyl lysine isopeptide (Lys-Gly) (interchain with G-Cter in SUMO2)" evidence="2">
    <location>
        <position position="916"/>
    </location>
</feature>
<feature type="splice variant" id="VSP_016859" description="In isoform 2." evidence="7">
    <original>RVTNLRRVTYVVLDEADRMFDMGFEPQVM</original>
    <variation>KSRVFYYLFSLLFVLDMIFVEADL</variation>
    <location>
        <begin position="516"/>
        <end position="544"/>
    </location>
</feature>
<keyword id="KW-0007">Acetylation</keyword>
<keyword id="KW-0025">Alternative splicing</keyword>
<keyword id="KW-0067">ATP-binding</keyword>
<keyword id="KW-0175">Coiled coil</keyword>
<keyword id="KW-0347">Helicase</keyword>
<keyword id="KW-0378">Hydrolase</keyword>
<keyword id="KW-1017">Isopeptide bond</keyword>
<keyword id="KW-0449">Lipoprotein</keyword>
<keyword id="KW-0507">mRNA processing</keyword>
<keyword id="KW-0508">mRNA splicing</keyword>
<keyword id="KW-0519">Myristate</keyword>
<keyword id="KW-0547">Nucleotide-binding</keyword>
<keyword id="KW-0539">Nucleus</keyword>
<keyword id="KW-0597">Phosphoprotein</keyword>
<keyword id="KW-1185">Reference proteome</keyword>
<keyword id="KW-0694">RNA-binding</keyword>
<keyword id="KW-0747">Spliceosome</keyword>
<keyword id="KW-0832">Ubl conjugation</keyword>
<accession>Q569Z5</accession>
<accession>Q6ZQ42</accession>
<accession>Q8R0R6</accession>
<comment type="function">
    <text evidence="2">Component of the 17S U2 SnRNP complex of the spliceosome, a large ribonucleoprotein complex that removes introns from transcribed pre-mRNAs. The 17S U2 SnRNP complex (1) directly participates in early spliceosome assembly and (2) mediates recognition of the intron branch site during pre-mRNA splicing by promoting the selection of the pre-mRNA branch-site adenosine, the nucleophile for the first step of splicing. Within the 17S U2 SnRNP complex, DDX46 plays essential roles during assembly of pre-spliceosome and proofreading of the branch site.</text>
</comment>
<comment type="catalytic activity">
    <reaction>
        <text>ATP + H2O = ADP + phosphate + H(+)</text>
        <dbReference type="Rhea" id="RHEA:13065"/>
        <dbReference type="ChEBI" id="CHEBI:15377"/>
        <dbReference type="ChEBI" id="CHEBI:15378"/>
        <dbReference type="ChEBI" id="CHEBI:30616"/>
        <dbReference type="ChEBI" id="CHEBI:43474"/>
        <dbReference type="ChEBI" id="CHEBI:456216"/>
        <dbReference type="EC" id="3.6.4.13"/>
    </reaction>
</comment>
<comment type="subunit">
    <text evidence="2">Component of the 17S U2 SnRNP complex, a ribonucleoprotein complex that contains small nuclear RNA (snRNA) U2 and a number of specific proteins. Within the 17S U2 SnRNP complex, DDX46 is part of the SF3B subcomplex, which is required for 'A' complex assembly formed by the stable binding of U2 snRNP to the branchpoint sequence in pre-mRNA. Recruited to the 17S U2 SnRNP complex following release of DDX42; DDX42 and DDX46 bind the SF3B subcomplex in a competitive manner.</text>
</comment>
<comment type="subcellular location">
    <subcellularLocation>
        <location evidence="2">Nucleus speckle</location>
    </subcellularLocation>
    <subcellularLocation>
        <location evidence="2">Nucleus</location>
        <location evidence="2">Cajal body</location>
    </subcellularLocation>
    <text evidence="2">Present in Cajal bodies (CBs) and nuclear speckles.</text>
</comment>
<comment type="alternative products">
    <event type="alternative splicing"/>
    <isoform>
        <id>Q569Z5-1</id>
        <name>1</name>
        <sequence type="displayed"/>
    </isoform>
    <isoform>
        <id>Q569Z5-2</id>
        <name>2</name>
        <sequence type="described" ref="VSP_016859"/>
    </isoform>
</comment>
<comment type="similarity">
    <text evidence="8">Belongs to the DEAD box helicase family. DDX46/PRP5 subfamily.</text>
</comment>
<comment type="sequence caution" evidence="8">
    <conflict type="erroneous initiation">
        <sequence resource="EMBL-CDS" id="AAH26492"/>
    </conflict>
</comment>
<comment type="sequence caution" evidence="8">
    <conflict type="erroneous termination">
        <sequence resource="EMBL-CDS" id="AAH92240"/>
    </conflict>
    <text>Truncated C-terminus.</text>
</comment>
<comment type="sequence caution" evidence="8">
    <conflict type="erroneous initiation">
        <sequence resource="EMBL-CDS" id="BAC98030"/>
    </conflict>
</comment>
<sequence>MGRESRHYRKRSASRGRSGSRSRSRSPSDKRSKRGDDRRSRSRDRDRRRERSRSRDKRRSRSRDRKRLRRSRSRERDRSRERRRSRSRDRRRSRSRSRGRRSRSSSPGSKTKKTENRSRSKEKAEGGDSSKEKKKDKDDKEDEKEKDAGNFDQNKLEEEMRKRKERVEKWREEQRKKAMENIGELKKEIEEMKQGKKWSLEDDDDDEDDPAEAEKEGTEMEDEELDPLDAYMEEVKEEVKKFNMRSVKGGAGNEKKSGPTVTKVVTVVTTKKAVVDADKKKGELMENDQDAMEYSSEEEEVDLQTALTGYQTKQRKLLEPVDHGKIEYEPFRKNFYVEVPELAKMSQEEVNVFRLEMEGITVKGKGCPKPIKSWVQCGISMKILNSLKKHGYEKPTPIQTQAIPAIMSGRDLIGIAKTGSGKTIAFLLPMFRHIMDQRSLEEGEGPIAVIMTPTRELALQITKECKKFSKTLGLRVVCVYGGTGISEQIAELKRGAEIIVCTPGRMIDMLAANSGRVTNLRRVTYVVLDEADRMFDMGFEPQVMRIVDNVRPDRQTVMFSATFPRAMEALARRILSKPIEVQVGGRSVVCSDVEQQVIVIEEEKKFLKLLELLGHYQESGSVIIFVDKQEHADGLLKDLMRASYPCMSLHGGIDQYDRDSIINDFKNGTCKLLVATSVAARGLDVKHLILVVNYSCPNHYEDYVHRAGRTGRAGNKGYAYTFITEDQARYAGDIIKALELSGTAVPPDLEKLWSDFKDQQKAEGKIIKKSSGFSGKGFKFDETEQALANERKKLQKAALGLQDSDDEDAAVDIDEQIESMFNSKKRVKDMAAPGTSSVPAPTAGNAEKLEIAKRLALRINAQKNLGIESQVDVMQQATNAILRGGTILAPTVSAKTIAEQLAEKINAKLNYVPLEKQEEERQEGGQSESFKRYEEELEINDFPQTARWKVTSKEALQRISEYSEAAITIRGTYFPPGKEPKEGERKIYLAIESANELAVQKAKAEITRLIKEELIRLQNSYQPTNKGRYKVL</sequence>
<evidence type="ECO:0000250" key="1">
    <source>
        <dbReference type="UniProtKB" id="Q62780"/>
    </source>
</evidence>
<evidence type="ECO:0000250" key="2">
    <source>
        <dbReference type="UniProtKB" id="Q7L014"/>
    </source>
</evidence>
<evidence type="ECO:0000255" key="3"/>
<evidence type="ECO:0000255" key="4">
    <source>
        <dbReference type="PROSITE-ProRule" id="PRU00541"/>
    </source>
</evidence>
<evidence type="ECO:0000255" key="5">
    <source>
        <dbReference type="PROSITE-ProRule" id="PRU00542"/>
    </source>
</evidence>
<evidence type="ECO:0000256" key="6">
    <source>
        <dbReference type="SAM" id="MobiDB-lite"/>
    </source>
</evidence>
<evidence type="ECO:0000303" key="7">
    <source>
    </source>
</evidence>
<evidence type="ECO:0000305" key="8"/>
<evidence type="ECO:0007744" key="9">
    <source>
    </source>
</evidence>
<evidence type="ECO:0007744" key="10">
    <source>
    </source>
</evidence>
<evidence type="ECO:0007744" key="11">
    <source>
    </source>
</evidence>